<organism>
    <name type="scientific">Dictyostelium discoideum</name>
    <name type="common">Social amoeba</name>
    <dbReference type="NCBI Taxonomy" id="44689"/>
    <lineage>
        <taxon>Eukaryota</taxon>
        <taxon>Amoebozoa</taxon>
        <taxon>Evosea</taxon>
        <taxon>Eumycetozoa</taxon>
        <taxon>Dictyostelia</taxon>
        <taxon>Dictyosteliales</taxon>
        <taxon>Dictyosteliaceae</taxon>
        <taxon>Dictyostelium</taxon>
    </lineage>
</organism>
<sequence length="307" mass="35260">MISNILKKSNSLFLRSTLSSNKFTNVTILRNSLFLNNNNNDNNTNIKQTYNKINFFSTTVPNQNEKIELKQEQIKQEQQQQPEQQPEQQTNKINNEIELKIKILENSLKYVNSYGWTSEAVSKACIEMGYPPITQGILGEDSAYELALYFVTKCNTDLMIKLSDAENSEQQLLSGLSKKEKVKLALKLRLSMIKPFIGRWSEAMQLLANPKNIVNSSPSMLTLVDNIWYLVGDKSSDFDWYAKRGLLIALYTSAELFMLSDTSVDHSNTWRFVDDRVDDLIKTIKFKNDIEETVGITLNTFLQKIKK</sequence>
<gene>
    <name type="primary">coq9</name>
    <name type="ORF">DDB_G0274457</name>
</gene>
<feature type="transit peptide" description="Mitochondrion" evidence="4">
    <location>
        <begin position="1"/>
        <end status="unknown"/>
    </location>
</feature>
<feature type="chain" id="PRO_0000339343" description="Probable ubiquinone biosynthesis protein coq9, mitochondrial">
    <location>
        <begin status="unknown"/>
        <end position="307"/>
    </location>
</feature>
<feature type="region of interest" description="Disordered" evidence="5">
    <location>
        <begin position="72"/>
        <end position="92"/>
    </location>
</feature>
<feature type="compositionally biased region" description="Low complexity" evidence="5">
    <location>
        <begin position="76"/>
        <end position="92"/>
    </location>
</feature>
<feature type="binding site" evidence="1">
    <location>
        <begin position="241"/>
        <end position="244"/>
    </location>
    <ligand>
        <name>a 1,2-diacylglycero-3-phosphoethanolamine</name>
        <dbReference type="ChEBI" id="CHEBI:57613"/>
    </ligand>
</feature>
<evidence type="ECO:0000250" key="1">
    <source>
        <dbReference type="UniProtKB" id="O75208"/>
    </source>
</evidence>
<evidence type="ECO:0000250" key="2">
    <source>
        <dbReference type="UniProtKB" id="Q05779"/>
    </source>
</evidence>
<evidence type="ECO:0000250" key="3">
    <source>
        <dbReference type="UniProtKB" id="Q8K1Z0"/>
    </source>
</evidence>
<evidence type="ECO:0000255" key="4"/>
<evidence type="ECO:0000256" key="5">
    <source>
        <dbReference type="SAM" id="MobiDB-lite"/>
    </source>
</evidence>
<evidence type="ECO:0000305" key="6"/>
<accession>Q86HS0</accession>
<accession>Q555A5</accession>
<comment type="function">
    <text evidence="1 2">Membrane-associated protein that warps the membrane surface to access and bind aromatic isoprenes with high specificity, including ubiquinone (CoQ) isoprene intermediates and presents them directly to coq7, therefore facilitating the coq7-mediated hydroxylase step. Participates in the biosynthesis of coenzyme Q, also named ubiquinone, an essential lipid-soluble electron transporter for aerobic cellular respiration.</text>
</comment>
<comment type="pathway">
    <text evidence="1">Cofactor biosynthesis; ubiquinone biosynthesis.</text>
</comment>
<comment type="subcellular location">
    <subcellularLocation>
        <location evidence="3">Mitochondrion</location>
    </subcellularLocation>
</comment>
<comment type="similarity">
    <text evidence="6">Belongs to the COQ9 family.</text>
</comment>
<keyword id="KW-0446">Lipid-binding</keyword>
<keyword id="KW-0496">Mitochondrion</keyword>
<keyword id="KW-1185">Reference proteome</keyword>
<keyword id="KW-0809">Transit peptide</keyword>
<keyword id="KW-0831">Ubiquinone biosynthesis</keyword>
<name>COQ9_DICDI</name>
<protein>
    <recommendedName>
        <fullName>Probable ubiquinone biosynthesis protein coq9, mitochondrial</fullName>
    </recommendedName>
</protein>
<proteinExistence type="inferred from homology"/>
<reference key="1">
    <citation type="journal article" date="2002" name="Nature">
        <title>Sequence and analysis of chromosome 2 of Dictyostelium discoideum.</title>
        <authorList>
            <person name="Gloeckner G."/>
            <person name="Eichinger L."/>
            <person name="Szafranski K."/>
            <person name="Pachebat J.A."/>
            <person name="Bankier A.T."/>
            <person name="Dear P.H."/>
            <person name="Lehmann R."/>
            <person name="Baumgart C."/>
            <person name="Parra G."/>
            <person name="Abril J.F."/>
            <person name="Guigo R."/>
            <person name="Kumpf K."/>
            <person name="Tunggal B."/>
            <person name="Cox E.C."/>
            <person name="Quail M.A."/>
            <person name="Platzer M."/>
            <person name="Rosenthal A."/>
            <person name="Noegel A.A."/>
        </authorList>
    </citation>
    <scope>NUCLEOTIDE SEQUENCE [LARGE SCALE GENOMIC DNA]</scope>
    <source>
        <strain>AX4</strain>
    </source>
</reference>
<reference key="2">
    <citation type="journal article" date="2005" name="Nature">
        <title>The genome of the social amoeba Dictyostelium discoideum.</title>
        <authorList>
            <person name="Eichinger L."/>
            <person name="Pachebat J.A."/>
            <person name="Gloeckner G."/>
            <person name="Rajandream M.A."/>
            <person name="Sucgang R."/>
            <person name="Berriman M."/>
            <person name="Song J."/>
            <person name="Olsen R."/>
            <person name="Szafranski K."/>
            <person name="Xu Q."/>
            <person name="Tunggal B."/>
            <person name="Kummerfeld S."/>
            <person name="Madera M."/>
            <person name="Konfortov B.A."/>
            <person name="Rivero F."/>
            <person name="Bankier A.T."/>
            <person name="Lehmann R."/>
            <person name="Hamlin N."/>
            <person name="Davies R."/>
            <person name="Gaudet P."/>
            <person name="Fey P."/>
            <person name="Pilcher K."/>
            <person name="Chen G."/>
            <person name="Saunders D."/>
            <person name="Sodergren E.J."/>
            <person name="Davis P."/>
            <person name="Kerhornou A."/>
            <person name="Nie X."/>
            <person name="Hall N."/>
            <person name="Anjard C."/>
            <person name="Hemphill L."/>
            <person name="Bason N."/>
            <person name="Farbrother P."/>
            <person name="Desany B."/>
            <person name="Just E."/>
            <person name="Morio T."/>
            <person name="Rost R."/>
            <person name="Churcher C.M."/>
            <person name="Cooper J."/>
            <person name="Haydock S."/>
            <person name="van Driessche N."/>
            <person name="Cronin A."/>
            <person name="Goodhead I."/>
            <person name="Muzny D.M."/>
            <person name="Mourier T."/>
            <person name="Pain A."/>
            <person name="Lu M."/>
            <person name="Harper D."/>
            <person name="Lindsay R."/>
            <person name="Hauser H."/>
            <person name="James K.D."/>
            <person name="Quiles M."/>
            <person name="Madan Babu M."/>
            <person name="Saito T."/>
            <person name="Buchrieser C."/>
            <person name="Wardroper A."/>
            <person name="Felder M."/>
            <person name="Thangavelu M."/>
            <person name="Johnson D."/>
            <person name="Knights A."/>
            <person name="Loulseged H."/>
            <person name="Mungall K.L."/>
            <person name="Oliver K."/>
            <person name="Price C."/>
            <person name="Quail M.A."/>
            <person name="Urushihara H."/>
            <person name="Hernandez J."/>
            <person name="Rabbinowitsch E."/>
            <person name="Steffen D."/>
            <person name="Sanders M."/>
            <person name="Ma J."/>
            <person name="Kohara Y."/>
            <person name="Sharp S."/>
            <person name="Simmonds M.N."/>
            <person name="Spiegler S."/>
            <person name="Tivey A."/>
            <person name="Sugano S."/>
            <person name="White B."/>
            <person name="Walker D."/>
            <person name="Woodward J.R."/>
            <person name="Winckler T."/>
            <person name="Tanaka Y."/>
            <person name="Shaulsky G."/>
            <person name="Schleicher M."/>
            <person name="Weinstock G.M."/>
            <person name="Rosenthal A."/>
            <person name="Cox E.C."/>
            <person name="Chisholm R.L."/>
            <person name="Gibbs R.A."/>
            <person name="Loomis W.F."/>
            <person name="Platzer M."/>
            <person name="Kay R.R."/>
            <person name="Williams J.G."/>
            <person name="Dear P.H."/>
            <person name="Noegel A.A."/>
            <person name="Barrell B.G."/>
            <person name="Kuspa A."/>
        </authorList>
    </citation>
    <scope>NUCLEOTIDE SEQUENCE [LARGE SCALE GENOMIC DNA]</scope>
    <source>
        <strain>AX4</strain>
    </source>
</reference>
<dbReference type="EMBL" id="AAFI02000012">
    <property type="protein sequence ID" value="EAL70121.2"/>
    <property type="molecule type" value="Genomic_DNA"/>
</dbReference>
<dbReference type="RefSeq" id="XP_644168.2">
    <property type="nucleotide sequence ID" value="XM_639076.2"/>
</dbReference>
<dbReference type="SMR" id="Q86HS0"/>
<dbReference type="FunCoup" id="Q86HS0">
    <property type="interactions" value="435"/>
</dbReference>
<dbReference type="STRING" id="44689.Q86HS0"/>
<dbReference type="PaxDb" id="44689-DDB0266667"/>
<dbReference type="EnsemblProtists" id="EAL70121">
    <property type="protein sequence ID" value="EAL70121"/>
    <property type="gene ID" value="DDB_G0274457"/>
</dbReference>
<dbReference type="GeneID" id="8619597"/>
<dbReference type="KEGG" id="ddi:DDB_G0274457"/>
<dbReference type="dictyBase" id="DDB_G0274457">
    <property type="gene designation" value="coq9"/>
</dbReference>
<dbReference type="VEuPathDB" id="AmoebaDB:DDB_G0274457"/>
<dbReference type="eggNOG" id="KOG2969">
    <property type="taxonomic scope" value="Eukaryota"/>
</dbReference>
<dbReference type="HOGENOM" id="CLU_057411_0_0_1"/>
<dbReference type="InParanoid" id="Q86HS0"/>
<dbReference type="OMA" id="LMFNTIN"/>
<dbReference type="PhylomeDB" id="Q86HS0"/>
<dbReference type="UniPathway" id="UPA00232"/>
<dbReference type="PRO" id="PR:Q86HS0"/>
<dbReference type="Proteomes" id="UP000002195">
    <property type="component" value="Chromosome 2"/>
</dbReference>
<dbReference type="GO" id="GO:0005743">
    <property type="term" value="C:mitochondrial inner membrane"/>
    <property type="evidence" value="ECO:0000318"/>
    <property type="project" value="GO_Central"/>
</dbReference>
<dbReference type="GO" id="GO:0005739">
    <property type="term" value="C:mitochondrion"/>
    <property type="evidence" value="ECO:0000250"/>
    <property type="project" value="dictyBase"/>
</dbReference>
<dbReference type="GO" id="GO:0008289">
    <property type="term" value="F:lipid binding"/>
    <property type="evidence" value="ECO:0000318"/>
    <property type="project" value="GO_Central"/>
</dbReference>
<dbReference type="GO" id="GO:0006744">
    <property type="term" value="P:ubiquinone biosynthetic process"/>
    <property type="evidence" value="ECO:0000250"/>
    <property type="project" value="dictyBase"/>
</dbReference>
<dbReference type="FunFam" id="1.10.357.10:FF:000004">
    <property type="entry name" value="Ubiquinone biosynthesis protein COQ9, mitochondrial"/>
    <property type="match status" value="1"/>
</dbReference>
<dbReference type="Gene3D" id="1.10.357.10">
    <property type="entry name" value="Tetracycline Repressor, domain 2"/>
    <property type="match status" value="1"/>
</dbReference>
<dbReference type="InterPro" id="IPR013718">
    <property type="entry name" value="COQ9_C"/>
</dbReference>
<dbReference type="InterPro" id="IPR012762">
    <property type="entry name" value="Ubiq_biosynth_COQ9"/>
</dbReference>
<dbReference type="NCBIfam" id="TIGR02396">
    <property type="entry name" value="diverge_rpsU"/>
    <property type="match status" value="1"/>
</dbReference>
<dbReference type="PANTHER" id="PTHR21427">
    <property type="entry name" value="UBIQUINONE BIOSYNTHESIS PROTEIN COQ9, MITOCHONDRIAL"/>
    <property type="match status" value="1"/>
</dbReference>
<dbReference type="PANTHER" id="PTHR21427:SF19">
    <property type="entry name" value="UBIQUINONE BIOSYNTHESIS PROTEIN COQ9, MITOCHONDRIAL"/>
    <property type="match status" value="1"/>
</dbReference>
<dbReference type="Pfam" id="PF08511">
    <property type="entry name" value="COQ9"/>
    <property type="match status" value="1"/>
</dbReference>